<sequence length="49" mass="5636">MKRTYQPNKRKRAKTHGFRARMATASGRAVLAARKRKGRHILTVSDEAR</sequence>
<gene>
    <name evidence="1" type="primary">rpmH</name>
    <name type="ordered locus">MYCGA0070</name>
    <name type="ORF">MGA_1323d</name>
</gene>
<accession>Q7NC71</accession>
<reference key="1">
    <citation type="journal article" date="2003" name="Microbiology">
        <title>The complete genome sequence of the avian pathogen Mycoplasma gallisepticum strain R(low).</title>
        <authorList>
            <person name="Papazisi L."/>
            <person name="Gorton T.S."/>
            <person name="Kutish G."/>
            <person name="Markham P.F."/>
            <person name="Browning G.F."/>
            <person name="Nguyen D.K."/>
            <person name="Swartzell S."/>
            <person name="Madan A."/>
            <person name="Mahairas G."/>
            <person name="Geary S.J."/>
        </authorList>
    </citation>
    <scope>NUCLEOTIDE SEQUENCE [LARGE SCALE GENOMIC DNA]</scope>
    <source>
        <strain>R(low / passage 15 / clone 2)</strain>
    </source>
</reference>
<organism>
    <name type="scientific">Mycoplasmoides gallisepticum (strain R(low / passage 15 / clone 2))</name>
    <name type="common">Mycoplasma gallisepticum</name>
    <dbReference type="NCBI Taxonomy" id="710127"/>
    <lineage>
        <taxon>Bacteria</taxon>
        <taxon>Bacillati</taxon>
        <taxon>Mycoplasmatota</taxon>
        <taxon>Mycoplasmoidales</taxon>
        <taxon>Mycoplasmoidaceae</taxon>
        <taxon>Mycoplasmoides</taxon>
    </lineage>
</organism>
<name>RL34_MYCGA</name>
<protein>
    <recommendedName>
        <fullName evidence="1">Large ribosomal subunit protein bL34</fullName>
    </recommendedName>
    <alternativeName>
        <fullName evidence="2">50S ribosomal protein L34</fullName>
    </alternativeName>
</protein>
<keyword id="KW-1185">Reference proteome</keyword>
<keyword id="KW-0687">Ribonucleoprotein</keyword>
<keyword id="KW-0689">Ribosomal protein</keyword>
<feature type="chain" id="PRO_0000187413" description="Large ribosomal subunit protein bL34">
    <location>
        <begin position="1"/>
        <end position="49"/>
    </location>
</feature>
<proteinExistence type="inferred from homology"/>
<comment type="similarity">
    <text evidence="1">Belongs to the bacterial ribosomal protein bL34 family.</text>
</comment>
<evidence type="ECO:0000255" key="1">
    <source>
        <dbReference type="HAMAP-Rule" id="MF_00391"/>
    </source>
</evidence>
<evidence type="ECO:0000305" key="2"/>
<dbReference type="EMBL" id="AE015450">
    <property type="protein sequence ID" value="AAP56357.1"/>
    <property type="molecule type" value="Genomic_DNA"/>
</dbReference>
<dbReference type="RefSeq" id="WP_011113236.1">
    <property type="nucleotide sequence ID" value="NC_004829.2"/>
</dbReference>
<dbReference type="SMR" id="Q7NC71"/>
<dbReference type="GeneID" id="93509828"/>
<dbReference type="KEGG" id="mga:MGA_1323d"/>
<dbReference type="HOGENOM" id="CLU_129938_2_0_14"/>
<dbReference type="OrthoDB" id="9804164at2"/>
<dbReference type="Proteomes" id="UP000001418">
    <property type="component" value="Chromosome"/>
</dbReference>
<dbReference type="GO" id="GO:1990904">
    <property type="term" value="C:ribonucleoprotein complex"/>
    <property type="evidence" value="ECO:0007669"/>
    <property type="project" value="UniProtKB-KW"/>
</dbReference>
<dbReference type="GO" id="GO:0005840">
    <property type="term" value="C:ribosome"/>
    <property type="evidence" value="ECO:0007669"/>
    <property type="project" value="UniProtKB-KW"/>
</dbReference>
<dbReference type="GO" id="GO:0003735">
    <property type="term" value="F:structural constituent of ribosome"/>
    <property type="evidence" value="ECO:0007669"/>
    <property type="project" value="InterPro"/>
</dbReference>
<dbReference type="GO" id="GO:0006412">
    <property type="term" value="P:translation"/>
    <property type="evidence" value="ECO:0007669"/>
    <property type="project" value="UniProtKB-UniRule"/>
</dbReference>
<dbReference type="FunFam" id="1.10.287.3980:FF:000001">
    <property type="entry name" value="Mitochondrial ribosomal protein L34"/>
    <property type="match status" value="1"/>
</dbReference>
<dbReference type="Gene3D" id="1.10.287.3980">
    <property type="match status" value="1"/>
</dbReference>
<dbReference type="HAMAP" id="MF_00391">
    <property type="entry name" value="Ribosomal_bL34"/>
    <property type="match status" value="1"/>
</dbReference>
<dbReference type="InterPro" id="IPR000271">
    <property type="entry name" value="Ribosomal_bL34"/>
</dbReference>
<dbReference type="InterPro" id="IPR020939">
    <property type="entry name" value="Ribosomal_bL34_CS"/>
</dbReference>
<dbReference type="NCBIfam" id="TIGR01030">
    <property type="entry name" value="rpmH_bact"/>
    <property type="match status" value="1"/>
</dbReference>
<dbReference type="PANTHER" id="PTHR14503:SF4">
    <property type="entry name" value="LARGE RIBOSOMAL SUBUNIT PROTEIN BL34M"/>
    <property type="match status" value="1"/>
</dbReference>
<dbReference type="PANTHER" id="PTHR14503">
    <property type="entry name" value="MITOCHONDRIAL RIBOSOMAL PROTEIN 34 FAMILY MEMBER"/>
    <property type="match status" value="1"/>
</dbReference>
<dbReference type="Pfam" id="PF00468">
    <property type="entry name" value="Ribosomal_L34"/>
    <property type="match status" value="1"/>
</dbReference>
<dbReference type="PROSITE" id="PS00784">
    <property type="entry name" value="RIBOSOMAL_L34"/>
    <property type="match status" value="1"/>
</dbReference>